<protein>
    <recommendedName>
        <fullName evidence="2">Conotoxin Cal9.2b</fullName>
    </recommendedName>
</protein>
<name>CU92B_CONCL</name>
<proteinExistence type="evidence at transcript level"/>
<evidence type="ECO:0000250" key="1"/>
<evidence type="ECO:0000303" key="2">
    <source>
    </source>
</evidence>
<evidence type="ECO:0000305" key="3"/>
<evidence type="ECO:0000305" key="4">
    <source>
    </source>
</evidence>
<dbReference type="EMBL" id="GU299516">
    <property type="protein sequence ID" value="ADB65791.1"/>
    <property type="molecule type" value="mRNA"/>
</dbReference>
<dbReference type="ConoServer" id="3991">
    <property type="toxin name" value="Cal9.2b precursor"/>
</dbReference>
<dbReference type="GO" id="GO:0005576">
    <property type="term" value="C:extracellular region"/>
    <property type="evidence" value="ECO:0007669"/>
    <property type="project" value="UniProtKB-SubCell"/>
</dbReference>
<dbReference type="GO" id="GO:0099106">
    <property type="term" value="F:ion channel regulator activity"/>
    <property type="evidence" value="ECO:0007669"/>
    <property type="project" value="UniProtKB-KW"/>
</dbReference>
<dbReference type="GO" id="GO:0090729">
    <property type="term" value="F:toxin activity"/>
    <property type="evidence" value="ECO:0007669"/>
    <property type="project" value="UniProtKB-KW"/>
</dbReference>
<feature type="propeptide" id="PRO_0000414947" evidence="4">
    <location>
        <begin position="1" status="less than"/>
        <end position="6"/>
    </location>
</feature>
<feature type="peptide" id="PRO_5000570804" description="Conotoxin Cal9.2b" evidence="4">
    <location>
        <begin position="8"/>
        <end position="52"/>
    </location>
</feature>
<feature type="disulfide bond" evidence="1">
    <location>
        <begin position="14"/>
        <end position="31"/>
    </location>
</feature>
<feature type="disulfide bond" evidence="1">
    <location>
        <begin position="19"/>
        <end position="41"/>
    </location>
</feature>
<feature type="disulfide bond" evidence="1">
    <location>
        <begin position="21"/>
        <end position="46"/>
    </location>
</feature>
<feature type="non-terminal residue">
    <location>
        <position position="1"/>
    </location>
</feature>
<accession>D2Y3T4</accession>
<organism>
    <name type="scientific">Californiconus californicus</name>
    <name type="common">California cone</name>
    <name type="synonym">Conus californicus</name>
    <dbReference type="NCBI Taxonomy" id="1736779"/>
    <lineage>
        <taxon>Eukaryota</taxon>
        <taxon>Metazoa</taxon>
        <taxon>Spiralia</taxon>
        <taxon>Lophotrochozoa</taxon>
        <taxon>Mollusca</taxon>
        <taxon>Gastropoda</taxon>
        <taxon>Caenogastropoda</taxon>
        <taxon>Neogastropoda</taxon>
        <taxon>Conoidea</taxon>
        <taxon>Conidae</taxon>
        <taxon>Californiconus</taxon>
    </lineage>
</organism>
<keyword id="KW-1015">Disulfide bond</keyword>
<keyword id="KW-0872">Ion channel impairing toxin</keyword>
<keyword id="KW-0528">Neurotoxin</keyword>
<keyword id="KW-0964">Secreted</keyword>
<keyword id="KW-0800">Toxin</keyword>
<comment type="function">
    <text evidence="3">Probable neurotoxin with unknown target. Possibly targets ion channels.</text>
</comment>
<comment type="subcellular location">
    <subcellularLocation>
        <location evidence="4">Secreted</location>
    </subcellularLocation>
</comment>
<comment type="tissue specificity">
    <text evidence="4">Expressed by the venom duct.</text>
</comment>
<comment type="domain">
    <text>The cysteine framework is IX (C-C-C-C-C-C).</text>
</comment>
<reference key="1">
    <citation type="journal article" date="2011" name="Toxicon">
        <title>Diversity of conotoxin types from Conus californicus reflects a diversity of prey types and a novel evolutionary history.</title>
        <authorList>
            <person name="Elliger C.A."/>
            <person name="Richmond T.A."/>
            <person name="Lebaric Z.N."/>
            <person name="Pierce N.T."/>
            <person name="Sweedler J.V."/>
            <person name="Gilly W.F."/>
        </authorList>
    </citation>
    <scope>NUCLEOTIDE SEQUENCE [MRNA]</scope>
    <source>
        <tissue>Venom duct</tissue>
    </source>
</reference>
<sequence>KKGVTLREDDRFPCNAGNCACLPLDSYSYTCQSPTSSTANCEGNECVSEADW</sequence>